<accession>Q6FP07</accession>
<feature type="chain" id="PRO_0000383723" description="Cytosolic Fe-S cluster assembly factor NAR1">
    <location>
        <begin position="1"/>
        <end position="551"/>
    </location>
</feature>
<feature type="region of interest" description="Disordered" evidence="3">
    <location>
        <begin position="395"/>
        <end position="435"/>
    </location>
</feature>
<feature type="compositionally biased region" description="Polar residues" evidence="3">
    <location>
        <begin position="421"/>
        <end position="431"/>
    </location>
</feature>
<feature type="binding site" evidence="2">
    <location>
        <position position="20"/>
    </location>
    <ligand>
        <name>[4Fe-4S] cluster</name>
        <dbReference type="ChEBI" id="CHEBI:49883"/>
        <label>1</label>
    </ligand>
</feature>
<feature type="binding site" evidence="2">
    <location>
        <position position="57"/>
    </location>
    <ligand>
        <name>[4Fe-4S] cluster</name>
        <dbReference type="ChEBI" id="CHEBI:49883"/>
        <label>1</label>
    </ligand>
</feature>
<feature type="binding site" evidence="2">
    <location>
        <position position="60"/>
    </location>
    <ligand>
        <name>[4Fe-4S] cluster</name>
        <dbReference type="ChEBI" id="CHEBI:49883"/>
        <label>1</label>
    </ligand>
</feature>
<feature type="binding site" evidence="2">
    <location>
        <position position="63"/>
    </location>
    <ligand>
        <name>[4Fe-4S] cluster</name>
        <dbReference type="ChEBI" id="CHEBI:49883"/>
        <label>1</label>
    </ligand>
</feature>
<feature type="binding site" evidence="2">
    <location>
        <position position="178"/>
    </location>
    <ligand>
        <name>[4Fe-4S] cluster</name>
        <dbReference type="ChEBI" id="CHEBI:49883"/>
        <label>2</label>
    </ligand>
</feature>
<feature type="binding site" evidence="2">
    <location>
        <position position="242"/>
    </location>
    <ligand>
        <name>[4Fe-4S] cluster</name>
        <dbReference type="ChEBI" id="CHEBI:49883"/>
        <label>2</label>
    </ligand>
</feature>
<feature type="binding site" evidence="2">
    <location>
        <position position="451"/>
    </location>
    <ligand>
        <name>[4Fe-4S] cluster</name>
        <dbReference type="ChEBI" id="CHEBI:49883"/>
        <label>2</label>
    </ligand>
</feature>
<evidence type="ECO:0000250" key="1"/>
<evidence type="ECO:0000255" key="2"/>
<evidence type="ECO:0000256" key="3">
    <source>
        <dbReference type="SAM" id="MobiDB-lite"/>
    </source>
</evidence>
<evidence type="ECO:0000305" key="4"/>
<comment type="function">
    <text evidence="1">Component of the cytosolic Fe/S protein assembly machinery. Required for maturation of extramitochondrial Fe/S proteins. May play a role in the transfer of pre-assembled Fe/S clusters to target apoproteins (By similarity).</text>
</comment>
<comment type="similarity">
    <text evidence="4">Belongs to the NARF family.</text>
</comment>
<organism>
    <name type="scientific">Candida glabrata (strain ATCC 2001 / BCRC 20586 / JCM 3761 / NBRC 0622 / NRRL Y-65 / CBS 138)</name>
    <name type="common">Yeast</name>
    <name type="synonym">Nakaseomyces glabratus</name>
    <dbReference type="NCBI Taxonomy" id="284593"/>
    <lineage>
        <taxon>Eukaryota</taxon>
        <taxon>Fungi</taxon>
        <taxon>Dikarya</taxon>
        <taxon>Ascomycota</taxon>
        <taxon>Saccharomycotina</taxon>
        <taxon>Saccharomycetes</taxon>
        <taxon>Saccharomycetales</taxon>
        <taxon>Saccharomycetaceae</taxon>
        <taxon>Nakaseomyces</taxon>
    </lineage>
</organism>
<dbReference type="EMBL" id="CR380956">
    <property type="protein sequence ID" value="CAG60988.1"/>
    <property type="molecule type" value="Genomic_DNA"/>
</dbReference>
<dbReference type="RefSeq" id="XP_448037.1">
    <property type="nucleotide sequence ID" value="XM_448037.1"/>
</dbReference>
<dbReference type="FunCoup" id="Q6FP07">
    <property type="interactions" value="403"/>
</dbReference>
<dbReference type="STRING" id="284593.Q6FP07"/>
<dbReference type="EnsemblFungi" id="CAGL0J07590g-T">
    <property type="protein sequence ID" value="CAGL0J07590g-T-p1"/>
    <property type="gene ID" value="CAGL0J07590g"/>
</dbReference>
<dbReference type="KEGG" id="cgr:2889897"/>
<dbReference type="CGD" id="CAL0133024">
    <property type="gene designation" value="CAGL0J07590g"/>
</dbReference>
<dbReference type="VEuPathDB" id="FungiDB:CAGL0J07590g"/>
<dbReference type="eggNOG" id="KOG2439">
    <property type="taxonomic scope" value="Eukaryota"/>
</dbReference>
<dbReference type="HOGENOM" id="CLU_018240_0_1_1"/>
<dbReference type="InParanoid" id="Q6FP07"/>
<dbReference type="OMA" id="GYLHHVL"/>
<dbReference type="Proteomes" id="UP000002428">
    <property type="component" value="Chromosome J"/>
</dbReference>
<dbReference type="GO" id="GO:0005829">
    <property type="term" value="C:cytosol"/>
    <property type="evidence" value="ECO:0007669"/>
    <property type="project" value="EnsemblFungi"/>
</dbReference>
<dbReference type="GO" id="GO:0016020">
    <property type="term" value="C:membrane"/>
    <property type="evidence" value="ECO:0007669"/>
    <property type="project" value="EnsemblFungi"/>
</dbReference>
<dbReference type="GO" id="GO:0051539">
    <property type="term" value="F:4 iron, 4 sulfur cluster binding"/>
    <property type="evidence" value="ECO:0007669"/>
    <property type="project" value="UniProtKB-KW"/>
</dbReference>
<dbReference type="GO" id="GO:0051536">
    <property type="term" value="F:iron-sulfur cluster binding"/>
    <property type="evidence" value="ECO:0000250"/>
    <property type="project" value="UniProtKB"/>
</dbReference>
<dbReference type="GO" id="GO:0046872">
    <property type="term" value="F:metal ion binding"/>
    <property type="evidence" value="ECO:0007669"/>
    <property type="project" value="UniProtKB-KW"/>
</dbReference>
<dbReference type="GO" id="GO:0016226">
    <property type="term" value="P:iron-sulfur cluster assembly"/>
    <property type="evidence" value="ECO:0000250"/>
    <property type="project" value="UniProtKB"/>
</dbReference>
<dbReference type="Gene3D" id="3.40.50.1780">
    <property type="match status" value="1"/>
</dbReference>
<dbReference type="Gene3D" id="3.40.950.10">
    <property type="entry name" value="Fe-only Hydrogenase (Larger Subunit), Chain L, domain 3"/>
    <property type="match status" value="1"/>
</dbReference>
<dbReference type="InterPro" id="IPR050340">
    <property type="entry name" value="Cytosolic_Fe-S_CAF"/>
</dbReference>
<dbReference type="InterPro" id="IPR009016">
    <property type="entry name" value="Fe_hydrogenase"/>
</dbReference>
<dbReference type="InterPro" id="IPR004108">
    <property type="entry name" value="Fe_hydrogenase_lsu_C"/>
</dbReference>
<dbReference type="PANTHER" id="PTHR11615">
    <property type="entry name" value="NITRATE, FORMATE, IRON DEHYDROGENASE"/>
    <property type="match status" value="1"/>
</dbReference>
<dbReference type="Pfam" id="PF02906">
    <property type="entry name" value="Fe_hyd_lg_C"/>
    <property type="match status" value="1"/>
</dbReference>
<dbReference type="SUPFAM" id="SSF53920">
    <property type="entry name" value="Fe-only hydrogenase"/>
    <property type="match status" value="1"/>
</dbReference>
<sequence>MSALLSEDYLNDYISPALACTKPTEIKKEKFVTEDGEFQVGVEPQELEKVTISLSDCLACSGCITSSEEIMLSQQSHSVFLDAWRELGFDKCGSAGDAQCTNKLVVSISPHCRASMARYYGVDVDAADYAILRVFKEVFHATSVIGDGAGRLLSVKRVVEELMERRKASQGTALSSICPGFLIYTEKTKPKLVPMLLNVKSAQQVTGALFKEIALEEGYDVDTSLKDGKRTNVQYHLTIVPCFDKKLEASRPDGEGEVNCVITPREVLAMLGEMGVSFRKYLGDWASLDKQLQQSQLGMLRAEMSPAGWDPLLHWSIPANGDGYSDGYAYQYACTVRDAHVASGCAAQVVSVPGKNADVLEYRVVEPSSEGGKVIARACVLSGFRNIQNLCRKLDPSGHKKRSVRRVAALRSRGRKDSSSEDSTGTPSAISNALGGTANPAECDYVEVSACPSGSINGGGLLMELAPEREEMGETPLPSSTIGGNARRRQQQLQELQAMYKAQIRITDETPTSLPPAALPPLPPQYTMQYTFYIQEEDPAKPDIVTVGNTW</sequence>
<proteinExistence type="inferred from homology"/>
<protein>
    <recommendedName>
        <fullName>Cytosolic Fe-S cluster assembly factor NAR1</fullName>
    </recommendedName>
    <alternativeName>
        <fullName>Nuclear architecture-related protein 1</fullName>
    </alternativeName>
</protein>
<keyword id="KW-0004">4Fe-4S</keyword>
<keyword id="KW-0408">Iron</keyword>
<keyword id="KW-0411">Iron-sulfur</keyword>
<keyword id="KW-0479">Metal-binding</keyword>
<keyword id="KW-1185">Reference proteome</keyword>
<name>NAR1_CANGA</name>
<gene>
    <name type="primary">NAR1</name>
    <name type="ordered locus">CAGL0J07590g</name>
</gene>
<reference key="1">
    <citation type="journal article" date="2004" name="Nature">
        <title>Genome evolution in yeasts.</title>
        <authorList>
            <person name="Dujon B."/>
            <person name="Sherman D."/>
            <person name="Fischer G."/>
            <person name="Durrens P."/>
            <person name="Casaregola S."/>
            <person name="Lafontaine I."/>
            <person name="de Montigny J."/>
            <person name="Marck C."/>
            <person name="Neuveglise C."/>
            <person name="Talla E."/>
            <person name="Goffard N."/>
            <person name="Frangeul L."/>
            <person name="Aigle M."/>
            <person name="Anthouard V."/>
            <person name="Babour A."/>
            <person name="Barbe V."/>
            <person name="Barnay S."/>
            <person name="Blanchin S."/>
            <person name="Beckerich J.-M."/>
            <person name="Beyne E."/>
            <person name="Bleykasten C."/>
            <person name="Boisrame A."/>
            <person name="Boyer J."/>
            <person name="Cattolico L."/>
            <person name="Confanioleri F."/>
            <person name="de Daruvar A."/>
            <person name="Despons L."/>
            <person name="Fabre E."/>
            <person name="Fairhead C."/>
            <person name="Ferry-Dumazet H."/>
            <person name="Groppi A."/>
            <person name="Hantraye F."/>
            <person name="Hennequin C."/>
            <person name="Jauniaux N."/>
            <person name="Joyet P."/>
            <person name="Kachouri R."/>
            <person name="Kerrest A."/>
            <person name="Koszul R."/>
            <person name="Lemaire M."/>
            <person name="Lesur I."/>
            <person name="Ma L."/>
            <person name="Muller H."/>
            <person name="Nicaud J.-M."/>
            <person name="Nikolski M."/>
            <person name="Oztas S."/>
            <person name="Ozier-Kalogeropoulos O."/>
            <person name="Pellenz S."/>
            <person name="Potier S."/>
            <person name="Richard G.-F."/>
            <person name="Straub M.-L."/>
            <person name="Suleau A."/>
            <person name="Swennen D."/>
            <person name="Tekaia F."/>
            <person name="Wesolowski-Louvel M."/>
            <person name="Westhof E."/>
            <person name="Wirth B."/>
            <person name="Zeniou-Meyer M."/>
            <person name="Zivanovic Y."/>
            <person name="Bolotin-Fukuhara M."/>
            <person name="Thierry A."/>
            <person name="Bouchier C."/>
            <person name="Caudron B."/>
            <person name="Scarpelli C."/>
            <person name="Gaillardin C."/>
            <person name="Weissenbach J."/>
            <person name="Wincker P."/>
            <person name="Souciet J.-L."/>
        </authorList>
    </citation>
    <scope>NUCLEOTIDE SEQUENCE [LARGE SCALE GENOMIC DNA]</scope>
    <source>
        <strain>ATCC 2001 / BCRC 20586 / JCM 3761 / NBRC 0622 / NRRL Y-65 / CBS 138</strain>
    </source>
</reference>